<dbReference type="EMBL" id="AE004092">
    <property type="protein sequence ID" value="AAK34759.1"/>
    <property type="molecule type" value="Genomic_DNA"/>
</dbReference>
<dbReference type="EMBL" id="CP000017">
    <property type="protein sequence ID" value="AAZ52415.1"/>
    <property type="molecule type" value="Genomic_DNA"/>
</dbReference>
<dbReference type="RefSeq" id="NP_270038.1">
    <property type="nucleotide sequence ID" value="NC_002737.2"/>
</dbReference>
<dbReference type="SMR" id="P68886"/>
<dbReference type="PaxDb" id="1314-HKU360_01911"/>
<dbReference type="KEGG" id="spy:SPy_2114"/>
<dbReference type="KEGG" id="spz:M5005_Spy1797"/>
<dbReference type="PATRIC" id="fig|160490.10.peg.1831"/>
<dbReference type="HOGENOM" id="CLU_162466_0_0_9"/>
<dbReference type="OMA" id="GYHPINQ"/>
<dbReference type="Proteomes" id="UP000000750">
    <property type="component" value="Chromosome"/>
</dbReference>
<dbReference type="HAMAP" id="MF_01507">
    <property type="entry name" value="UPF0297"/>
    <property type="match status" value="1"/>
</dbReference>
<dbReference type="InterPro" id="IPR009309">
    <property type="entry name" value="IreB"/>
</dbReference>
<dbReference type="NCBIfam" id="NF003997">
    <property type="entry name" value="PRK05473.1"/>
    <property type="match status" value="1"/>
</dbReference>
<dbReference type="PANTHER" id="PTHR40067">
    <property type="entry name" value="UPF0297 PROTEIN YRZL"/>
    <property type="match status" value="1"/>
</dbReference>
<dbReference type="PANTHER" id="PTHR40067:SF1">
    <property type="entry name" value="UPF0297 PROTEIN YRZL"/>
    <property type="match status" value="1"/>
</dbReference>
<dbReference type="Pfam" id="PF06135">
    <property type="entry name" value="IreB"/>
    <property type="match status" value="1"/>
</dbReference>
<dbReference type="PIRSF" id="PIRSF037258">
    <property type="entry name" value="DUF965_bac"/>
    <property type="match status" value="1"/>
</dbReference>
<sequence>MGFTDETVRFKLDDGDKRQISETLTAVYHSLDEKGYNPINQIVGYVLSGDPAYVPRYNDARNQIRKYERDEIVEELVRYYLQGNGIDVK</sequence>
<proteinExistence type="inferred from homology"/>
<comment type="similarity">
    <text evidence="1">Belongs to the UPF0297 family.</text>
</comment>
<keyword id="KW-1185">Reference proteome</keyword>
<reference key="1">
    <citation type="journal article" date="2001" name="Proc. Natl. Acad. Sci. U.S.A.">
        <title>Complete genome sequence of an M1 strain of Streptococcus pyogenes.</title>
        <authorList>
            <person name="Ferretti J.J."/>
            <person name="McShan W.M."/>
            <person name="Ajdic D.J."/>
            <person name="Savic D.J."/>
            <person name="Savic G."/>
            <person name="Lyon K."/>
            <person name="Primeaux C."/>
            <person name="Sezate S."/>
            <person name="Suvorov A.N."/>
            <person name="Kenton S."/>
            <person name="Lai H.S."/>
            <person name="Lin S.P."/>
            <person name="Qian Y."/>
            <person name="Jia H.G."/>
            <person name="Najar F.Z."/>
            <person name="Ren Q."/>
            <person name="Zhu H."/>
            <person name="Song L."/>
            <person name="White J."/>
            <person name="Yuan X."/>
            <person name="Clifton S.W."/>
            <person name="Roe B.A."/>
            <person name="McLaughlin R.E."/>
        </authorList>
    </citation>
    <scope>NUCLEOTIDE SEQUENCE [LARGE SCALE GENOMIC DNA]</scope>
    <source>
        <strain>ATCC 700294 / SF370 / Serotype M1</strain>
    </source>
</reference>
<reference key="2">
    <citation type="journal article" date="2005" name="J. Infect. Dis.">
        <title>Evolutionary origin and emergence of a highly successful clone of serotype M1 group A Streptococcus involved multiple horizontal gene transfer events.</title>
        <authorList>
            <person name="Sumby P."/>
            <person name="Porcella S.F."/>
            <person name="Madrigal A.G."/>
            <person name="Barbian K.D."/>
            <person name="Virtaneva K."/>
            <person name="Ricklefs S.M."/>
            <person name="Sturdevant D.E."/>
            <person name="Graham M.R."/>
            <person name="Vuopio-Varkila J."/>
            <person name="Hoe N.P."/>
            <person name="Musser J.M."/>
        </authorList>
    </citation>
    <scope>NUCLEOTIDE SEQUENCE [LARGE SCALE GENOMIC DNA]</scope>
    <source>
        <strain>ATCC BAA-947 / MGAS5005 / Serotype M1</strain>
    </source>
</reference>
<name>Y2114_STRP1</name>
<feature type="chain" id="PRO_0000216992" description="UPF0297 protein SPy_2114/M5005_Spy1797">
    <location>
        <begin position="1"/>
        <end position="89"/>
    </location>
</feature>
<accession>P68886</accession>
<accession>P82591</accession>
<accession>Q48W60</accession>
<accession>Q99XP3</accession>
<organism>
    <name type="scientific">Streptococcus pyogenes serotype M1</name>
    <dbReference type="NCBI Taxonomy" id="301447"/>
    <lineage>
        <taxon>Bacteria</taxon>
        <taxon>Bacillati</taxon>
        <taxon>Bacillota</taxon>
        <taxon>Bacilli</taxon>
        <taxon>Lactobacillales</taxon>
        <taxon>Streptococcaceae</taxon>
        <taxon>Streptococcus</taxon>
    </lineage>
</organism>
<protein>
    <recommendedName>
        <fullName>UPF0297 protein SPy_2114/M5005_Spy1797</fullName>
    </recommendedName>
</protein>
<gene>
    <name type="ordered locus">SPy_2114</name>
    <name type="ordered locus">M5005_Spy1797</name>
</gene>
<evidence type="ECO:0000305" key="1"/>